<evidence type="ECO:0000250" key="1">
    <source>
        <dbReference type="UniProtKB" id="P25808"/>
    </source>
</evidence>
<evidence type="ECO:0000255" key="2"/>
<evidence type="ECO:0000255" key="3">
    <source>
        <dbReference type="PROSITE-ProRule" id="PRU00541"/>
    </source>
</evidence>
<evidence type="ECO:0000255" key="4">
    <source>
        <dbReference type="PROSITE-ProRule" id="PRU00542"/>
    </source>
</evidence>
<evidence type="ECO:0000256" key="5">
    <source>
        <dbReference type="SAM" id="MobiDB-lite"/>
    </source>
</evidence>
<evidence type="ECO:0000305" key="6"/>
<reference key="1">
    <citation type="journal article" date="2007" name="Nat. Biotechnol.">
        <title>Genome sequencing and analysis of the versatile cell factory Aspergillus niger CBS 513.88.</title>
        <authorList>
            <person name="Pel H.J."/>
            <person name="de Winde J.H."/>
            <person name="Archer D.B."/>
            <person name="Dyer P.S."/>
            <person name="Hofmann G."/>
            <person name="Schaap P.J."/>
            <person name="Turner G."/>
            <person name="de Vries R.P."/>
            <person name="Albang R."/>
            <person name="Albermann K."/>
            <person name="Andersen M.R."/>
            <person name="Bendtsen J.D."/>
            <person name="Benen J.A.E."/>
            <person name="van den Berg M."/>
            <person name="Breestraat S."/>
            <person name="Caddick M.X."/>
            <person name="Contreras R."/>
            <person name="Cornell M."/>
            <person name="Coutinho P.M."/>
            <person name="Danchin E.G.J."/>
            <person name="Debets A.J.M."/>
            <person name="Dekker P."/>
            <person name="van Dijck P.W.M."/>
            <person name="van Dijk A."/>
            <person name="Dijkhuizen L."/>
            <person name="Driessen A.J.M."/>
            <person name="d'Enfert C."/>
            <person name="Geysens S."/>
            <person name="Goosen C."/>
            <person name="Groot G.S.P."/>
            <person name="de Groot P.W.J."/>
            <person name="Guillemette T."/>
            <person name="Henrissat B."/>
            <person name="Herweijer M."/>
            <person name="van den Hombergh J.P.T.W."/>
            <person name="van den Hondel C.A.M.J.J."/>
            <person name="van der Heijden R.T.J.M."/>
            <person name="van der Kaaij R.M."/>
            <person name="Klis F.M."/>
            <person name="Kools H.J."/>
            <person name="Kubicek C.P."/>
            <person name="van Kuyk P.A."/>
            <person name="Lauber J."/>
            <person name="Lu X."/>
            <person name="van der Maarel M.J.E.C."/>
            <person name="Meulenberg R."/>
            <person name="Menke H."/>
            <person name="Mortimer M.A."/>
            <person name="Nielsen J."/>
            <person name="Oliver S.G."/>
            <person name="Olsthoorn M."/>
            <person name="Pal K."/>
            <person name="van Peij N.N.M.E."/>
            <person name="Ram A.F.J."/>
            <person name="Rinas U."/>
            <person name="Roubos J.A."/>
            <person name="Sagt C.M.J."/>
            <person name="Schmoll M."/>
            <person name="Sun J."/>
            <person name="Ussery D."/>
            <person name="Varga J."/>
            <person name="Vervecken W."/>
            <person name="van de Vondervoort P.J.J."/>
            <person name="Wedler H."/>
            <person name="Woesten H.A.B."/>
            <person name="Zeng A.-P."/>
            <person name="van Ooyen A.J.J."/>
            <person name="Visser J."/>
            <person name="Stam H."/>
        </authorList>
    </citation>
    <scope>NUCLEOTIDE SEQUENCE [LARGE SCALE GENOMIC DNA]</scope>
    <source>
        <strain>ATCC MYA-4892 / CBS 513.88 / FGSC A1513</strain>
    </source>
</reference>
<comment type="function">
    <text evidence="1">ATP-binding RNA helicase involved in the biogenesis of 60S ribosomal subunits. Binds 90S pre-ribosomal particles and dissociates from pre-60S ribosomal particles after processing of 27SB pre-rRNA. Required for the normal formation of 18S rRNA through the processing of pre-rRNAs at sites A0, A1 and A2, and the normal formation of 25S and 5.8S rRNAs through the processing of pre-rRNAs at sites C1 and C2.</text>
</comment>
<comment type="catalytic activity">
    <reaction evidence="1">
        <text>ATP + H2O = ADP + phosphate + H(+)</text>
        <dbReference type="Rhea" id="RHEA:13065"/>
        <dbReference type="ChEBI" id="CHEBI:15377"/>
        <dbReference type="ChEBI" id="CHEBI:15378"/>
        <dbReference type="ChEBI" id="CHEBI:30616"/>
        <dbReference type="ChEBI" id="CHEBI:43474"/>
        <dbReference type="ChEBI" id="CHEBI:456216"/>
        <dbReference type="EC" id="3.6.4.13"/>
    </reaction>
</comment>
<comment type="subunit">
    <text evidence="1">Component of pre-60S ribosomal complexes.</text>
</comment>
<comment type="subcellular location">
    <subcellularLocation>
        <location evidence="1">Nucleus</location>
        <location evidence="1">Nucleolus</location>
    </subcellularLocation>
</comment>
<comment type="domain">
    <text>The Q motif is unique to and characteristic of the DEAD box family of RNA helicases and controls ATP binding and hydrolysis.</text>
</comment>
<comment type="similarity">
    <text evidence="6">Belongs to the DEAD box helicase family. DDX55/SPB4 subfamily.</text>
</comment>
<comment type="sequence caution" evidence="6">
    <conflict type="erroneous gene model prediction">
        <sequence resource="EMBL-CDS" id="CAK44325"/>
    </conflict>
</comment>
<feature type="chain" id="PRO_0000282704" description="ATP-dependent rRNA helicase spb4">
    <location>
        <begin position="1"/>
        <end position="642"/>
    </location>
</feature>
<feature type="domain" description="Helicase ATP-binding" evidence="3">
    <location>
        <begin position="45"/>
        <end position="250"/>
    </location>
</feature>
<feature type="domain" description="Helicase C-terminal" evidence="4">
    <location>
        <begin position="284"/>
        <end position="438"/>
    </location>
</feature>
<feature type="region of interest" description="Disordered" evidence="5">
    <location>
        <begin position="527"/>
        <end position="642"/>
    </location>
</feature>
<feature type="coiled-coil region" evidence="2">
    <location>
        <begin position="522"/>
        <end position="625"/>
    </location>
</feature>
<feature type="short sequence motif" description="Q motif" evidence="6">
    <location>
        <begin position="14"/>
        <end position="42"/>
    </location>
</feature>
<feature type="short sequence motif" description="DEAD box" evidence="6">
    <location>
        <begin position="198"/>
        <end position="201"/>
    </location>
</feature>
<feature type="compositionally biased region" description="Basic and acidic residues" evidence="5">
    <location>
        <begin position="527"/>
        <end position="536"/>
    </location>
</feature>
<feature type="compositionally biased region" description="Basic and acidic residues" evidence="5">
    <location>
        <begin position="577"/>
        <end position="628"/>
    </location>
</feature>
<feature type="compositionally biased region" description="Acidic residues" evidence="5">
    <location>
        <begin position="632"/>
        <end position="642"/>
    </location>
</feature>
<feature type="binding site" evidence="3">
    <location>
        <begin position="58"/>
        <end position="65"/>
    </location>
    <ligand>
        <name>ATP</name>
        <dbReference type="ChEBI" id="CHEBI:30616"/>
    </ligand>
</feature>
<gene>
    <name evidence="1" type="primary">spb4</name>
    <name type="ORF">An02g09170</name>
</gene>
<sequence>MAPKPPPGTSARAWDGVTPALSEWVLDAVASMGFTRMTPVQASAIPLFMAHKDVVVEAVTGSGKTLSFLIPVVEKLLRLEEPLKKHHVGAIIISPTRELASQIYNVLTSLLAFHPPSASTLKPSDDDDDAPRQKFPSSTLKVVPQLLLGGSTTPAEDLSTFLKRSPNLLVSTPGRLLELLSSPHVHCPQSSFEMLVMDEADRLLDLGFKDTLQNILRRLPKQRRTGLFSASVSEAVDQIVRVGLRNPVKVMVKVKGTSGVQDKRTPASLQMTYLTAPPTHKFPAIKHILYSLEPAPQKTIMFVSTCSGVDYLSAILPSIIGDDFQLIPLHGKHQANVREKNFNRFVNSHTPAILLTTDVASRGLDIPSVDVVIQIDPPSDPKTFIHRCGRAGRAGRKGLSVVLLHPGREEDYVSFLEVRKTPVAPYPHTLTITDADAAAATETARKAVLADRALHDRGQKAFVSWFRSYSKHQASSIFRVADLDWEGLGNAWGLLKLPKMPELRNFQGDRTLGVNLDWENYAYKDKQREKRRKEQVQENAENGVADDQAAGKKRSSESVAWSRNLDNRNKKLKRREAKQARQQKDKWEKMTEEERQKVLETEKMLEQIRVKNEEERLLRRAAKDKESKAAGGDDDDEFKGFD</sequence>
<keyword id="KW-0067">ATP-binding</keyword>
<keyword id="KW-0175">Coiled coil</keyword>
<keyword id="KW-0347">Helicase</keyword>
<keyword id="KW-0378">Hydrolase</keyword>
<keyword id="KW-0547">Nucleotide-binding</keyword>
<keyword id="KW-0539">Nucleus</keyword>
<keyword id="KW-1185">Reference proteome</keyword>
<keyword id="KW-0690">Ribosome biogenesis</keyword>
<keyword id="KW-0694">RNA-binding</keyword>
<keyword id="KW-0698">rRNA processing</keyword>
<accession>A2QE29</accession>
<organism>
    <name type="scientific">Aspergillus niger (strain ATCC MYA-4892 / CBS 513.88 / FGSC A1513)</name>
    <dbReference type="NCBI Taxonomy" id="425011"/>
    <lineage>
        <taxon>Eukaryota</taxon>
        <taxon>Fungi</taxon>
        <taxon>Dikarya</taxon>
        <taxon>Ascomycota</taxon>
        <taxon>Pezizomycotina</taxon>
        <taxon>Eurotiomycetes</taxon>
        <taxon>Eurotiomycetidae</taxon>
        <taxon>Eurotiales</taxon>
        <taxon>Aspergillaceae</taxon>
        <taxon>Aspergillus</taxon>
        <taxon>Aspergillus subgen. Circumdati</taxon>
    </lineage>
</organism>
<name>SPB4_ASPNC</name>
<protein>
    <recommendedName>
        <fullName evidence="6">ATP-dependent rRNA helicase spb4</fullName>
        <ecNumber evidence="1">3.6.4.13</ecNumber>
    </recommendedName>
</protein>
<proteinExistence type="inferred from homology"/>
<dbReference type="EC" id="3.6.4.13" evidence="1"/>
<dbReference type="EMBL" id="AM270022">
    <property type="protein sequence ID" value="CAK44325.1"/>
    <property type="status" value="ALT_SEQ"/>
    <property type="molecule type" value="Genomic_DNA"/>
</dbReference>
<dbReference type="RefSeq" id="XP_001400050.2">
    <property type="nucleotide sequence ID" value="XM_001400013.2"/>
</dbReference>
<dbReference type="SMR" id="A2QE29"/>
<dbReference type="EnsemblFungi" id="CAK44325">
    <property type="protein sequence ID" value="CAK44325"/>
    <property type="gene ID" value="An02g09170"/>
</dbReference>
<dbReference type="OrthoDB" id="94676at5052"/>
<dbReference type="Proteomes" id="UP000006706">
    <property type="component" value="Chromosome 4R"/>
</dbReference>
<dbReference type="GO" id="GO:0030686">
    <property type="term" value="C:90S preribosome"/>
    <property type="evidence" value="ECO:0007669"/>
    <property type="project" value="EnsemblFungi"/>
</dbReference>
<dbReference type="GO" id="GO:0005730">
    <property type="term" value="C:nucleolus"/>
    <property type="evidence" value="ECO:0007669"/>
    <property type="project" value="UniProtKB-SubCell"/>
</dbReference>
<dbReference type="GO" id="GO:0005654">
    <property type="term" value="C:nucleoplasm"/>
    <property type="evidence" value="ECO:0007669"/>
    <property type="project" value="EnsemblFungi"/>
</dbReference>
<dbReference type="GO" id="GO:0030687">
    <property type="term" value="C:preribosome, large subunit precursor"/>
    <property type="evidence" value="ECO:0007669"/>
    <property type="project" value="EnsemblFungi"/>
</dbReference>
<dbReference type="GO" id="GO:0005524">
    <property type="term" value="F:ATP binding"/>
    <property type="evidence" value="ECO:0007669"/>
    <property type="project" value="UniProtKB-KW"/>
</dbReference>
<dbReference type="GO" id="GO:0016887">
    <property type="term" value="F:ATP hydrolysis activity"/>
    <property type="evidence" value="ECO:0007669"/>
    <property type="project" value="RHEA"/>
</dbReference>
<dbReference type="GO" id="GO:0003723">
    <property type="term" value="F:RNA binding"/>
    <property type="evidence" value="ECO:0007669"/>
    <property type="project" value="UniProtKB-KW"/>
</dbReference>
<dbReference type="GO" id="GO:0003724">
    <property type="term" value="F:RNA helicase activity"/>
    <property type="evidence" value="ECO:0007669"/>
    <property type="project" value="UniProtKB-EC"/>
</dbReference>
<dbReference type="GO" id="GO:1902626">
    <property type="term" value="P:assembly of large subunit precursor of preribosome"/>
    <property type="evidence" value="ECO:0007669"/>
    <property type="project" value="EnsemblFungi"/>
</dbReference>
<dbReference type="GO" id="GO:0000470">
    <property type="term" value="P:maturation of LSU-rRNA"/>
    <property type="evidence" value="ECO:0007669"/>
    <property type="project" value="EnsemblFungi"/>
</dbReference>
<dbReference type="CDD" id="cd17960">
    <property type="entry name" value="DEADc_DDX55"/>
    <property type="match status" value="1"/>
</dbReference>
<dbReference type="CDD" id="cd18787">
    <property type="entry name" value="SF2_C_DEAD"/>
    <property type="match status" value="1"/>
</dbReference>
<dbReference type="Gene3D" id="3.40.50.300">
    <property type="entry name" value="P-loop containing nucleotide triphosphate hydrolases"/>
    <property type="match status" value="2"/>
</dbReference>
<dbReference type="InterPro" id="IPR056330">
    <property type="entry name" value="CTT_SPB4"/>
</dbReference>
<dbReference type="InterPro" id="IPR011545">
    <property type="entry name" value="DEAD/DEAH_box_helicase_dom"/>
</dbReference>
<dbReference type="InterPro" id="IPR014001">
    <property type="entry name" value="Helicase_ATP-bd"/>
</dbReference>
<dbReference type="InterPro" id="IPR001650">
    <property type="entry name" value="Helicase_C-like"/>
</dbReference>
<dbReference type="InterPro" id="IPR027417">
    <property type="entry name" value="P-loop_NTPase"/>
</dbReference>
<dbReference type="InterPro" id="IPR000629">
    <property type="entry name" value="RNA-helicase_DEAD-box_CS"/>
</dbReference>
<dbReference type="InterPro" id="IPR014014">
    <property type="entry name" value="RNA_helicase_DEAD_Q_motif"/>
</dbReference>
<dbReference type="InterPro" id="IPR025313">
    <property type="entry name" value="SPB4-like_CTE"/>
</dbReference>
<dbReference type="PANTHER" id="PTHR24031">
    <property type="entry name" value="RNA HELICASE"/>
    <property type="match status" value="1"/>
</dbReference>
<dbReference type="Pfam" id="PF13959">
    <property type="entry name" value="CTE_SPB4"/>
    <property type="match status" value="1"/>
</dbReference>
<dbReference type="Pfam" id="PF23681">
    <property type="entry name" value="CTT_SPB4"/>
    <property type="match status" value="1"/>
</dbReference>
<dbReference type="Pfam" id="PF00270">
    <property type="entry name" value="DEAD"/>
    <property type="match status" value="1"/>
</dbReference>
<dbReference type="Pfam" id="PF00271">
    <property type="entry name" value="Helicase_C"/>
    <property type="match status" value="1"/>
</dbReference>
<dbReference type="SMART" id="SM00487">
    <property type="entry name" value="DEXDc"/>
    <property type="match status" value="1"/>
</dbReference>
<dbReference type="SMART" id="SM01178">
    <property type="entry name" value="DUF4217"/>
    <property type="match status" value="1"/>
</dbReference>
<dbReference type="SMART" id="SM00490">
    <property type="entry name" value="HELICc"/>
    <property type="match status" value="1"/>
</dbReference>
<dbReference type="SUPFAM" id="SSF52540">
    <property type="entry name" value="P-loop containing nucleoside triphosphate hydrolases"/>
    <property type="match status" value="1"/>
</dbReference>
<dbReference type="PROSITE" id="PS00039">
    <property type="entry name" value="DEAD_ATP_HELICASE"/>
    <property type="match status" value="1"/>
</dbReference>
<dbReference type="PROSITE" id="PS51192">
    <property type="entry name" value="HELICASE_ATP_BIND_1"/>
    <property type="match status" value="1"/>
</dbReference>
<dbReference type="PROSITE" id="PS51194">
    <property type="entry name" value="HELICASE_CTER"/>
    <property type="match status" value="1"/>
</dbReference>
<dbReference type="PROSITE" id="PS51195">
    <property type="entry name" value="Q_MOTIF"/>
    <property type="match status" value="1"/>
</dbReference>